<sequence length="360" mass="40561">MSDLDTLLMETLAQVAFAADEGELENVRVGALGKKGTISALLATLGKMSPDERKVQGAAINALKDKVNEALAERRLILKEQKLEARLAAEIIDVTLPVLPRPEELGRIHPITQVMDELAAIFAEMGFAIAEGPDIETDDYNFTKLNFPPDHPARDMHDTFFFEPDAQGQRKVLRTHTSPVQVRTMLTQKPPIRVICPGRTYRCDSDQTHTPMFHQVEGLVIDKSAHLGHLKWILEEFCKAFFEVPDVKMRFRPSYFPFTEPSMEVDIQCSRKGGEIRFGEGEDWLEILGCGMVHPNVLRNCGLDPDVYQGFAWGMGIDRIAMLKYGMPDLRAFFEADIRWLNHYGFRPLDMPSLLSGLSS</sequence>
<gene>
    <name evidence="1" type="primary">pheS</name>
    <name type="ordered locus">Bind_2157</name>
</gene>
<reference key="1">
    <citation type="journal article" date="2010" name="J. Bacteriol.">
        <title>Complete genome sequence of Beijerinckia indica subsp. indica.</title>
        <authorList>
            <person name="Tamas I."/>
            <person name="Dedysh S.N."/>
            <person name="Liesack W."/>
            <person name="Stott M.B."/>
            <person name="Alam M."/>
            <person name="Murrell J.C."/>
            <person name="Dunfield P.F."/>
        </authorList>
    </citation>
    <scope>NUCLEOTIDE SEQUENCE [LARGE SCALE GENOMIC DNA]</scope>
    <source>
        <strain>ATCC 9039 / DSM 1715 / NCIMB 8712</strain>
    </source>
</reference>
<accession>B2IGL6</accession>
<keyword id="KW-0030">Aminoacyl-tRNA synthetase</keyword>
<keyword id="KW-0067">ATP-binding</keyword>
<keyword id="KW-0963">Cytoplasm</keyword>
<keyword id="KW-0436">Ligase</keyword>
<keyword id="KW-0460">Magnesium</keyword>
<keyword id="KW-0479">Metal-binding</keyword>
<keyword id="KW-0547">Nucleotide-binding</keyword>
<keyword id="KW-0648">Protein biosynthesis</keyword>
<keyword id="KW-1185">Reference proteome</keyword>
<dbReference type="EC" id="6.1.1.20" evidence="1"/>
<dbReference type="EMBL" id="CP001016">
    <property type="protein sequence ID" value="ACB95777.1"/>
    <property type="molecule type" value="Genomic_DNA"/>
</dbReference>
<dbReference type="RefSeq" id="WP_012385133.1">
    <property type="nucleotide sequence ID" value="NC_010581.1"/>
</dbReference>
<dbReference type="SMR" id="B2IGL6"/>
<dbReference type="STRING" id="395963.Bind_2157"/>
<dbReference type="KEGG" id="bid:Bind_2157"/>
<dbReference type="eggNOG" id="COG0016">
    <property type="taxonomic scope" value="Bacteria"/>
</dbReference>
<dbReference type="HOGENOM" id="CLU_025086_0_1_5"/>
<dbReference type="OrthoDB" id="9800719at2"/>
<dbReference type="Proteomes" id="UP000001695">
    <property type="component" value="Chromosome"/>
</dbReference>
<dbReference type="GO" id="GO:0005737">
    <property type="term" value="C:cytoplasm"/>
    <property type="evidence" value="ECO:0007669"/>
    <property type="project" value="UniProtKB-SubCell"/>
</dbReference>
<dbReference type="GO" id="GO:0005524">
    <property type="term" value="F:ATP binding"/>
    <property type="evidence" value="ECO:0007669"/>
    <property type="project" value="UniProtKB-UniRule"/>
</dbReference>
<dbReference type="GO" id="GO:0000287">
    <property type="term" value="F:magnesium ion binding"/>
    <property type="evidence" value="ECO:0007669"/>
    <property type="project" value="UniProtKB-UniRule"/>
</dbReference>
<dbReference type="GO" id="GO:0004826">
    <property type="term" value="F:phenylalanine-tRNA ligase activity"/>
    <property type="evidence" value="ECO:0007669"/>
    <property type="project" value="UniProtKB-UniRule"/>
</dbReference>
<dbReference type="GO" id="GO:0000049">
    <property type="term" value="F:tRNA binding"/>
    <property type="evidence" value="ECO:0007669"/>
    <property type="project" value="InterPro"/>
</dbReference>
<dbReference type="GO" id="GO:0006432">
    <property type="term" value="P:phenylalanyl-tRNA aminoacylation"/>
    <property type="evidence" value="ECO:0007669"/>
    <property type="project" value="UniProtKB-UniRule"/>
</dbReference>
<dbReference type="CDD" id="cd00496">
    <property type="entry name" value="PheRS_alpha_core"/>
    <property type="match status" value="1"/>
</dbReference>
<dbReference type="FunFam" id="3.30.930.10:FF:000003">
    <property type="entry name" value="Phenylalanine--tRNA ligase alpha subunit"/>
    <property type="match status" value="1"/>
</dbReference>
<dbReference type="Gene3D" id="3.30.930.10">
    <property type="entry name" value="Bira Bifunctional Protein, Domain 2"/>
    <property type="match status" value="1"/>
</dbReference>
<dbReference type="HAMAP" id="MF_00281">
    <property type="entry name" value="Phe_tRNA_synth_alpha1"/>
    <property type="match status" value="1"/>
</dbReference>
<dbReference type="InterPro" id="IPR006195">
    <property type="entry name" value="aa-tRNA-synth_II"/>
</dbReference>
<dbReference type="InterPro" id="IPR045864">
    <property type="entry name" value="aa-tRNA-synth_II/BPL/LPL"/>
</dbReference>
<dbReference type="InterPro" id="IPR004529">
    <property type="entry name" value="Phe-tRNA-synth_IIc_asu"/>
</dbReference>
<dbReference type="InterPro" id="IPR004188">
    <property type="entry name" value="Phe-tRNA_ligase_II_N"/>
</dbReference>
<dbReference type="InterPro" id="IPR022911">
    <property type="entry name" value="Phe_tRNA_ligase_alpha1_bac"/>
</dbReference>
<dbReference type="InterPro" id="IPR002319">
    <property type="entry name" value="Phenylalanyl-tRNA_Synthase"/>
</dbReference>
<dbReference type="InterPro" id="IPR010978">
    <property type="entry name" value="tRNA-bd_arm"/>
</dbReference>
<dbReference type="NCBIfam" id="TIGR00468">
    <property type="entry name" value="pheS"/>
    <property type="match status" value="1"/>
</dbReference>
<dbReference type="PANTHER" id="PTHR11538:SF41">
    <property type="entry name" value="PHENYLALANINE--TRNA LIGASE, MITOCHONDRIAL"/>
    <property type="match status" value="1"/>
</dbReference>
<dbReference type="PANTHER" id="PTHR11538">
    <property type="entry name" value="PHENYLALANYL-TRNA SYNTHETASE"/>
    <property type="match status" value="1"/>
</dbReference>
<dbReference type="Pfam" id="PF02912">
    <property type="entry name" value="Phe_tRNA-synt_N"/>
    <property type="match status" value="1"/>
</dbReference>
<dbReference type="Pfam" id="PF01409">
    <property type="entry name" value="tRNA-synt_2d"/>
    <property type="match status" value="1"/>
</dbReference>
<dbReference type="SUPFAM" id="SSF55681">
    <property type="entry name" value="Class II aaRS and biotin synthetases"/>
    <property type="match status" value="1"/>
</dbReference>
<dbReference type="SUPFAM" id="SSF46589">
    <property type="entry name" value="tRNA-binding arm"/>
    <property type="match status" value="1"/>
</dbReference>
<dbReference type="PROSITE" id="PS50862">
    <property type="entry name" value="AA_TRNA_LIGASE_II"/>
    <property type="match status" value="1"/>
</dbReference>
<protein>
    <recommendedName>
        <fullName evidence="1">Phenylalanine--tRNA ligase alpha subunit</fullName>
        <ecNumber evidence="1">6.1.1.20</ecNumber>
    </recommendedName>
    <alternativeName>
        <fullName evidence="1">Phenylalanyl-tRNA synthetase alpha subunit</fullName>
        <shortName evidence="1">PheRS</shortName>
    </alternativeName>
</protein>
<organism>
    <name type="scientific">Beijerinckia indica subsp. indica (strain ATCC 9039 / DSM 1715 / NCIMB 8712)</name>
    <dbReference type="NCBI Taxonomy" id="395963"/>
    <lineage>
        <taxon>Bacteria</taxon>
        <taxon>Pseudomonadati</taxon>
        <taxon>Pseudomonadota</taxon>
        <taxon>Alphaproteobacteria</taxon>
        <taxon>Hyphomicrobiales</taxon>
        <taxon>Beijerinckiaceae</taxon>
        <taxon>Beijerinckia</taxon>
    </lineage>
</organism>
<feature type="chain" id="PRO_1000114849" description="Phenylalanine--tRNA ligase alpha subunit">
    <location>
        <begin position="1"/>
        <end position="360"/>
    </location>
</feature>
<feature type="binding site" evidence="1">
    <location>
        <position position="260"/>
    </location>
    <ligand>
        <name>Mg(2+)</name>
        <dbReference type="ChEBI" id="CHEBI:18420"/>
        <note>shared with beta subunit</note>
    </ligand>
</feature>
<proteinExistence type="inferred from homology"/>
<evidence type="ECO:0000255" key="1">
    <source>
        <dbReference type="HAMAP-Rule" id="MF_00281"/>
    </source>
</evidence>
<name>SYFA_BEII9</name>
<comment type="catalytic activity">
    <reaction evidence="1">
        <text>tRNA(Phe) + L-phenylalanine + ATP = L-phenylalanyl-tRNA(Phe) + AMP + diphosphate + H(+)</text>
        <dbReference type="Rhea" id="RHEA:19413"/>
        <dbReference type="Rhea" id="RHEA-COMP:9668"/>
        <dbReference type="Rhea" id="RHEA-COMP:9699"/>
        <dbReference type="ChEBI" id="CHEBI:15378"/>
        <dbReference type="ChEBI" id="CHEBI:30616"/>
        <dbReference type="ChEBI" id="CHEBI:33019"/>
        <dbReference type="ChEBI" id="CHEBI:58095"/>
        <dbReference type="ChEBI" id="CHEBI:78442"/>
        <dbReference type="ChEBI" id="CHEBI:78531"/>
        <dbReference type="ChEBI" id="CHEBI:456215"/>
        <dbReference type="EC" id="6.1.1.20"/>
    </reaction>
</comment>
<comment type="cofactor">
    <cofactor evidence="1">
        <name>Mg(2+)</name>
        <dbReference type="ChEBI" id="CHEBI:18420"/>
    </cofactor>
    <text evidence="1">Binds 2 magnesium ions per tetramer.</text>
</comment>
<comment type="subunit">
    <text evidence="1">Tetramer of two alpha and two beta subunits.</text>
</comment>
<comment type="subcellular location">
    <subcellularLocation>
        <location evidence="1">Cytoplasm</location>
    </subcellularLocation>
</comment>
<comment type="similarity">
    <text evidence="1">Belongs to the class-II aminoacyl-tRNA synthetase family. Phe-tRNA synthetase alpha subunit type 1 subfamily.</text>
</comment>